<gene>
    <name evidence="15 18" type="primary">Casp7</name>
    <name type="synonym">Lice2</name>
    <name type="synonym">Mch3</name>
</gene>
<feature type="propeptide" id="PRO_0000004624" evidence="17">
    <location>
        <begin position="1"/>
        <end position="23"/>
    </location>
</feature>
<feature type="chain" id="PRO_0000004625" description="Caspase-7 subunit p20" evidence="17">
    <location>
        <begin position="24"/>
        <end position="198"/>
    </location>
</feature>
<feature type="propeptide" id="PRO_0000004626" evidence="17">
    <location>
        <begin position="199"/>
        <end position="206"/>
    </location>
</feature>
<feature type="chain" id="PRO_0000004627" description="Caspase-7 subunit p11" evidence="3">
    <location>
        <begin position="207"/>
        <end position="303"/>
    </location>
</feature>
<feature type="region of interest" description="Disordered" evidence="4">
    <location>
        <begin position="1"/>
        <end position="26"/>
    </location>
</feature>
<feature type="region of interest" description="Exosite" evidence="3">
    <location>
        <begin position="38"/>
        <end position="41"/>
    </location>
</feature>
<feature type="region of interest" description="Loop L1" evidence="3">
    <location>
        <begin position="76"/>
        <end position="87"/>
    </location>
</feature>
<feature type="region of interest" description="Loop L2" evidence="3">
    <location>
        <begin position="187"/>
        <end position="196"/>
    </location>
</feature>
<feature type="region of interest" description="Loop L3" evidence="3">
    <location>
        <begin position="226"/>
        <end position="238"/>
    </location>
</feature>
<feature type="region of interest" description="Loop L4" evidence="3">
    <location>
        <begin position="274"/>
        <end position="288"/>
    </location>
</feature>
<feature type="compositionally biased region" description="Basic and acidic residues" evidence="4">
    <location>
        <begin position="10"/>
        <end position="26"/>
    </location>
</feature>
<feature type="active site" evidence="1">
    <location>
        <position position="144"/>
    </location>
</feature>
<feature type="active site" evidence="3">
    <location>
        <position position="186"/>
    </location>
</feature>
<feature type="site" description="Cleavage; by CAPN1" evidence="3">
    <location>
        <begin position="36"/>
        <end position="37"/>
    </location>
</feature>
<feature type="site" description="Cleavage; by CAPN1" evidence="3">
    <location>
        <begin position="45"/>
        <end position="46"/>
    </location>
</feature>
<feature type="site" description="Cleavage; by CAPN1" evidence="3">
    <location>
        <begin position="47"/>
        <end position="48"/>
    </location>
</feature>
<feature type="site" description="Involved in allosteric regulation" evidence="3">
    <location>
        <position position="187"/>
    </location>
</feature>
<feature type="site" description="Involved in allosteric regulation" evidence="3">
    <location>
        <position position="223"/>
    </location>
</feature>
<feature type="modified residue" description="N-acetylmethionine" evidence="19">
    <location>
        <position position="1"/>
    </location>
</feature>
<feature type="modified residue" description="Phosphoserine" evidence="3">
    <location>
        <position position="30"/>
    </location>
</feature>
<feature type="modified residue" description="Phosphothreonine" evidence="3">
    <location>
        <position position="173"/>
    </location>
</feature>
<feature type="modified residue" description="Phosphoserine" evidence="3">
    <location>
        <position position="239"/>
    </location>
</feature>
<feature type="mutagenesis site" description="Abolished cleavage and activation; when associated with A-198." evidence="6">
    <original>D</original>
    <variation>A</variation>
    <location>
        <position position="23"/>
    </location>
</feature>
<feature type="mutagenesis site" description="Abolished cleavage and activation; when associated with A-23." evidence="6">
    <original>D</original>
    <variation>A</variation>
    <location>
        <position position="198"/>
    </location>
</feature>
<feature type="sequence conflict" description="In Ref. 2; BAA19730." evidence="16" ref="2">
    <original>EL</original>
    <variation>DW</variation>
    <location>
        <begin position="10"/>
        <end position="11"/>
    </location>
</feature>
<feature type="sequence conflict" description="In Ref. 2; BAA19730." evidence="16" ref="2">
    <original>A</original>
    <variation>T</variation>
    <location>
        <position position="45"/>
    </location>
</feature>
<feature type="sequence conflict" description="In Ref. 2; BAA19730." evidence="16" ref="2">
    <original>VR</original>
    <variation>RQ</variation>
    <location>
        <begin position="48"/>
        <end position="49"/>
    </location>
</feature>
<sequence length="303" mass="34061">MTDDQDCAAELEKVDSSSEDGVDAKPDRSSIISSILLKKKRNASAGPVRTGRDRVPTYLYRMDFQKMGKCIIINNKNFDKATGMDVRNGTDKDAGALFKCFQNLGFEVTVHNDCSCAKMQDLLRKASEEDHSNSACFACVLLSHGEEDLIYGKDGVTPIKDLTAHFRGDRCKTLLEKPKLFFIQACRGTELDDGIQADSGPINDIDANPRNKIPVEADFLFAYSTVPGYYSWRNPGKGSWFVQALCSILNEHGKDLEIMQILTRVNDRVARHFESQSDDPRFNEKKQIPCMVSMLTKELYFSR</sequence>
<protein>
    <recommendedName>
        <fullName evidence="15">Caspase-7</fullName>
        <shortName evidence="15">CASP-7</shortName>
        <ecNumber evidence="10 13">3.4.22.60</ecNumber>
    </recommendedName>
    <alternativeName>
        <fullName>Apoptotic protease Mch-3</fullName>
    </alternativeName>
    <alternativeName>
        <fullName>Cysteine protease LICE2</fullName>
    </alternativeName>
    <component>
        <recommendedName>
            <fullName>Caspase-7 subunit p20</fullName>
        </recommendedName>
    </component>
    <component>
        <recommendedName>
            <fullName>Caspase-7 subunit p11</fullName>
        </recommendedName>
    </component>
</protein>
<keyword id="KW-0007">Acetylation</keyword>
<keyword id="KW-0021">Allosteric enzyme</keyword>
<keyword id="KW-0053">Apoptosis</keyword>
<keyword id="KW-0963">Cytoplasm</keyword>
<keyword id="KW-0378">Hydrolase</keyword>
<keyword id="KW-0539">Nucleus</keyword>
<keyword id="KW-0597">Phosphoprotein</keyword>
<keyword id="KW-0645">Protease</keyword>
<keyword id="KW-1185">Reference proteome</keyword>
<keyword id="KW-0694">RNA-binding</keyword>
<keyword id="KW-0964">Secreted</keyword>
<keyword id="KW-0788">Thiol protease</keyword>
<keyword id="KW-0832">Ubl conjugation</keyword>
<keyword id="KW-0865">Zymogen</keyword>
<accession>P97864</accession>
<accession>O08669</accession>
<evidence type="ECO:0000250" key="1">
    <source>
        <dbReference type="UniProtKB" id="P29466"/>
    </source>
</evidence>
<evidence type="ECO:0000250" key="2">
    <source>
        <dbReference type="UniProtKB" id="P42574"/>
    </source>
</evidence>
<evidence type="ECO:0000250" key="3">
    <source>
        <dbReference type="UniProtKB" id="P55210"/>
    </source>
</evidence>
<evidence type="ECO:0000256" key="4">
    <source>
        <dbReference type="SAM" id="MobiDB-lite"/>
    </source>
</evidence>
<evidence type="ECO:0000269" key="5">
    <source>
    </source>
</evidence>
<evidence type="ECO:0000269" key="6">
    <source>
    </source>
</evidence>
<evidence type="ECO:0000269" key="7">
    <source>
    </source>
</evidence>
<evidence type="ECO:0000269" key="8">
    <source>
    </source>
</evidence>
<evidence type="ECO:0000269" key="9">
    <source>
    </source>
</evidence>
<evidence type="ECO:0000269" key="10">
    <source>
    </source>
</evidence>
<evidence type="ECO:0000269" key="11">
    <source>
    </source>
</evidence>
<evidence type="ECO:0000269" key="12">
    <source>
    </source>
</evidence>
<evidence type="ECO:0000269" key="13">
    <source>
    </source>
</evidence>
<evidence type="ECO:0000269" key="14">
    <source>
    </source>
</evidence>
<evidence type="ECO:0000303" key="15">
    <source>
    </source>
</evidence>
<evidence type="ECO:0000305" key="16"/>
<evidence type="ECO:0000305" key="17">
    <source>
    </source>
</evidence>
<evidence type="ECO:0000312" key="18">
    <source>
        <dbReference type="MGI" id="MGI:109383"/>
    </source>
</evidence>
<evidence type="ECO:0007744" key="19">
    <source>
    </source>
</evidence>
<dbReference type="EC" id="3.4.22.60" evidence="10 13"/>
<dbReference type="EMBL" id="U67321">
    <property type="protein sequence ID" value="AAC53068.1"/>
    <property type="status" value="ALT_INIT"/>
    <property type="molecule type" value="mRNA"/>
</dbReference>
<dbReference type="EMBL" id="D86353">
    <property type="protein sequence ID" value="BAA19730.1"/>
    <property type="molecule type" value="mRNA"/>
</dbReference>
<dbReference type="EMBL" id="Y13088">
    <property type="protein sequence ID" value="CAA73530.1"/>
    <property type="molecule type" value="mRNA"/>
</dbReference>
<dbReference type="EMBL" id="BC005428">
    <property type="protein sequence ID" value="AAH05428.1"/>
    <property type="molecule type" value="mRNA"/>
</dbReference>
<dbReference type="CCDS" id="CCDS29915.1"/>
<dbReference type="RefSeq" id="NP_031637.1">
    <property type="nucleotide sequence ID" value="NM_007611.3"/>
</dbReference>
<dbReference type="SMR" id="P97864"/>
<dbReference type="BioGRID" id="198499">
    <property type="interactions" value="7"/>
</dbReference>
<dbReference type="ComplexPortal" id="CPX-3947">
    <property type="entry name" value="Caspase-7 complex"/>
</dbReference>
<dbReference type="FunCoup" id="P97864">
    <property type="interactions" value="1465"/>
</dbReference>
<dbReference type="IntAct" id="P97864">
    <property type="interactions" value="10"/>
</dbReference>
<dbReference type="STRING" id="10090.ENSMUSP00000026062"/>
<dbReference type="MEROPS" id="C14.004"/>
<dbReference type="iPTMnet" id="P97864"/>
<dbReference type="PhosphoSitePlus" id="P97864"/>
<dbReference type="jPOST" id="P97864"/>
<dbReference type="PaxDb" id="10090-ENSMUSP00000026062"/>
<dbReference type="PeptideAtlas" id="P97864"/>
<dbReference type="ProteomicsDB" id="265536"/>
<dbReference type="Pumba" id="P97864"/>
<dbReference type="Antibodypedia" id="18528">
    <property type="antibodies" value="1078 antibodies from 47 providers"/>
</dbReference>
<dbReference type="DNASU" id="12369"/>
<dbReference type="Ensembl" id="ENSMUST00000026062.10">
    <property type="protein sequence ID" value="ENSMUSP00000026062.10"/>
    <property type="gene ID" value="ENSMUSG00000025076.13"/>
</dbReference>
<dbReference type="GeneID" id="12369"/>
<dbReference type="KEGG" id="mmu:12369"/>
<dbReference type="UCSC" id="uc008hyw.1">
    <property type="organism name" value="mouse"/>
</dbReference>
<dbReference type="AGR" id="MGI:109383"/>
<dbReference type="CTD" id="840"/>
<dbReference type="MGI" id="MGI:109383">
    <property type="gene designation" value="Casp7"/>
</dbReference>
<dbReference type="VEuPathDB" id="HostDB:ENSMUSG00000025076"/>
<dbReference type="eggNOG" id="KOG3573">
    <property type="taxonomic scope" value="Eukaryota"/>
</dbReference>
<dbReference type="GeneTree" id="ENSGT00940000153232"/>
<dbReference type="HOGENOM" id="CLU_036904_2_0_1"/>
<dbReference type="InParanoid" id="P97864"/>
<dbReference type="OMA" id="ENTGMNV"/>
<dbReference type="OrthoDB" id="6116485at2759"/>
<dbReference type="PhylomeDB" id="P97864"/>
<dbReference type="TreeFam" id="TF102023"/>
<dbReference type="BRENDA" id="3.4.22.60">
    <property type="organism ID" value="3474"/>
</dbReference>
<dbReference type="Reactome" id="R-MMU-111459">
    <property type="pathway name" value="Activation of caspases through apoptosome-mediated cleavage"/>
</dbReference>
<dbReference type="Reactome" id="R-MMU-111463">
    <property type="pathway name" value="SMAC (DIABLO) binds to IAPs"/>
</dbReference>
<dbReference type="Reactome" id="R-MMU-111464">
    <property type="pathway name" value="SMAC(DIABLO)-mediated dissociation of IAP:caspase complexes"/>
</dbReference>
<dbReference type="Reactome" id="R-MMU-111465">
    <property type="pathway name" value="Apoptotic cleavage of cellular proteins"/>
</dbReference>
<dbReference type="Reactome" id="R-MMU-111469">
    <property type="pathway name" value="SMAC, XIAP-regulated apoptotic response"/>
</dbReference>
<dbReference type="Reactome" id="R-MMU-264870">
    <property type="pathway name" value="Caspase-mediated cleavage of cytoskeletal proteins"/>
</dbReference>
<dbReference type="BioGRID-ORCS" id="12369">
    <property type="hits" value="4 hits in 78 CRISPR screens"/>
</dbReference>
<dbReference type="ChiTaRS" id="Casp7">
    <property type="organism name" value="mouse"/>
</dbReference>
<dbReference type="PRO" id="PR:P97864"/>
<dbReference type="Proteomes" id="UP000000589">
    <property type="component" value="Chromosome 19"/>
</dbReference>
<dbReference type="RNAct" id="P97864">
    <property type="molecule type" value="protein"/>
</dbReference>
<dbReference type="Bgee" id="ENSMUSG00000025076">
    <property type="expression patterns" value="Expressed in intestinal villus and 219 other cell types or tissues"/>
</dbReference>
<dbReference type="ExpressionAtlas" id="P97864">
    <property type="expression patterns" value="baseline and differential"/>
</dbReference>
<dbReference type="GO" id="GO:0005737">
    <property type="term" value="C:cytoplasm"/>
    <property type="evidence" value="ECO:0000250"/>
    <property type="project" value="UniProtKB"/>
</dbReference>
<dbReference type="GO" id="GO:0005829">
    <property type="term" value="C:cytosol"/>
    <property type="evidence" value="ECO:0000250"/>
    <property type="project" value="UniProtKB"/>
</dbReference>
<dbReference type="GO" id="GO:0005615">
    <property type="term" value="C:extracellular space"/>
    <property type="evidence" value="ECO:0000314"/>
    <property type="project" value="UniProtKB"/>
</dbReference>
<dbReference type="GO" id="GO:0001650">
    <property type="term" value="C:fibrillar center"/>
    <property type="evidence" value="ECO:0007669"/>
    <property type="project" value="Ensembl"/>
</dbReference>
<dbReference type="GO" id="GO:0005654">
    <property type="term" value="C:nucleoplasm"/>
    <property type="evidence" value="ECO:0007669"/>
    <property type="project" value="Ensembl"/>
</dbReference>
<dbReference type="GO" id="GO:0005634">
    <property type="term" value="C:nucleus"/>
    <property type="evidence" value="ECO:0000250"/>
    <property type="project" value="UniProtKB"/>
</dbReference>
<dbReference type="GO" id="GO:0005886">
    <property type="term" value="C:plasma membrane"/>
    <property type="evidence" value="ECO:0007669"/>
    <property type="project" value="Ensembl"/>
</dbReference>
<dbReference type="GO" id="GO:0004190">
    <property type="term" value="F:aspartic-type endopeptidase activity"/>
    <property type="evidence" value="ECO:0000314"/>
    <property type="project" value="UniProtKB"/>
</dbReference>
<dbReference type="GO" id="GO:0004197">
    <property type="term" value="F:cysteine-type endopeptidase activity"/>
    <property type="evidence" value="ECO:0000314"/>
    <property type="project" value="UniProtKB"/>
</dbReference>
<dbReference type="GO" id="GO:0003723">
    <property type="term" value="F:RNA binding"/>
    <property type="evidence" value="ECO:0000250"/>
    <property type="project" value="UniProtKB"/>
</dbReference>
<dbReference type="GO" id="GO:0071222">
    <property type="term" value="P:cellular response to lipopolysaccharide"/>
    <property type="evidence" value="ECO:0007669"/>
    <property type="project" value="Ensembl"/>
</dbReference>
<dbReference type="GO" id="GO:0072734">
    <property type="term" value="P:cellular response to staurosporine"/>
    <property type="evidence" value="ECO:0007669"/>
    <property type="project" value="Ensembl"/>
</dbReference>
<dbReference type="GO" id="GO:0042742">
    <property type="term" value="P:defense response to bacterium"/>
    <property type="evidence" value="ECO:0000314"/>
    <property type="project" value="UniProtKB"/>
</dbReference>
<dbReference type="GO" id="GO:0097194">
    <property type="term" value="P:execution phase of apoptosis"/>
    <property type="evidence" value="ECO:0000316"/>
    <property type="project" value="MGI"/>
</dbReference>
<dbReference type="GO" id="GO:0044346">
    <property type="term" value="P:fibroblast apoptotic process"/>
    <property type="evidence" value="ECO:0000316"/>
    <property type="project" value="MGI"/>
</dbReference>
<dbReference type="GO" id="GO:0007507">
    <property type="term" value="P:heart development"/>
    <property type="evidence" value="ECO:0000316"/>
    <property type="project" value="MGI"/>
</dbReference>
<dbReference type="GO" id="GO:0070227">
    <property type="term" value="P:lymphocyte apoptotic process"/>
    <property type="evidence" value="ECO:0000315"/>
    <property type="project" value="UniProtKB"/>
</dbReference>
<dbReference type="GO" id="GO:0051402">
    <property type="term" value="P:neuron apoptotic process"/>
    <property type="evidence" value="ECO:0000314"/>
    <property type="project" value="MGI"/>
</dbReference>
<dbReference type="GO" id="GO:1905686">
    <property type="term" value="P:positive regulation of plasma membrane repair"/>
    <property type="evidence" value="ECO:0000314"/>
    <property type="project" value="UniProtKB"/>
</dbReference>
<dbReference type="GO" id="GO:0030163">
    <property type="term" value="P:protein catabolic process"/>
    <property type="evidence" value="ECO:0007669"/>
    <property type="project" value="Ensembl"/>
</dbReference>
<dbReference type="GO" id="GO:0051604">
    <property type="term" value="P:protein maturation"/>
    <property type="evidence" value="ECO:0000314"/>
    <property type="project" value="UniProt"/>
</dbReference>
<dbReference type="GO" id="GO:0016485">
    <property type="term" value="P:protein processing"/>
    <property type="evidence" value="ECO:0000314"/>
    <property type="project" value="MGI"/>
</dbReference>
<dbReference type="GO" id="GO:0009411">
    <property type="term" value="P:response to UV"/>
    <property type="evidence" value="ECO:0000316"/>
    <property type="project" value="MGI"/>
</dbReference>
<dbReference type="GO" id="GO:0051146">
    <property type="term" value="P:striated muscle cell differentiation"/>
    <property type="evidence" value="ECO:0007669"/>
    <property type="project" value="Ensembl"/>
</dbReference>
<dbReference type="CDD" id="cd00032">
    <property type="entry name" value="CASc"/>
    <property type="match status" value="1"/>
</dbReference>
<dbReference type="FunFam" id="3.30.70.1470:FF:000002">
    <property type="entry name" value="Caspase-3"/>
    <property type="match status" value="1"/>
</dbReference>
<dbReference type="FunFam" id="3.40.50.1460:FF:000001">
    <property type="entry name" value="Caspase-3 preproprotein"/>
    <property type="match status" value="1"/>
</dbReference>
<dbReference type="Gene3D" id="3.40.50.1460">
    <property type="match status" value="1"/>
</dbReference>
<dbReference type="Gene3D" id="3.30.70.1470">
    <property type="entry name" value="Caspase-like"/>
    <property type="match status" value="1"/>
</dbReference>
<dbReference type="InterPro" id="IPR029030">
    <property type="entry name" value="Caspase-like_dom_sf"/>
</dbReference>
<dbReference type="InterPro" id="IPR033139">
    <property type="entry name" value="Caspase_cys_AS"/>
</dbReference>
<dbReference type="InterPro" id="IPR016129">
    <property type="entry name" value="Caspase_his_AS"/>
</dbReference>
<dbReference type="InterPro" id="IPR002398">
    <property type="entry name" value="Pept_C14"/>
</dbReference>
<dbReference type="InterPro" id="IPR011600">
    <property type="entry name" value="Pept_C14_caspase"/>
</dbReference>
<dbReference type="InterPro" id="IPR002138">
    <property type="entry name" value="Pept_C14_p10"/>
</dbReference>
<dbReference type="InterPro" id="IPR001309">
    <property type="entry name" value="Pept_C14_p20"/>
</dbReference>
<dbReference type="InterPro" id="IPR015917">
    <property type="entry name" value="Pept_C14A"/>
</dbReference>
<dbReference type="PANTHER" id="PTHR10454">
    <property type="entry name" value="CASPASE"/>
    <property type="match status" value="1"/>
</dbReference>
<dbReference type="PANTHER" id="PTHR10454:SF31">
    <property type="entry name" value="CASPASE-7"/>
    <property type="match status" value="1"/>
</dbReference>
<dbReference type="Pfam" id="PF00656">
    <property type="entry name" value="Peptidase_C14"/>
    <property type="match status" value="1"/>
</dbReference>
<dbReference type="PIRSF" id="PIRSF038001">
    <property type="entry name" value="Caspase_ICE"/>
    <property type="match status" value="1"/>
</dbReference>
<dbReference type="PRINTS" id="PR00376">
    <property type="entry name" value="IL1BCENZYME"/>
</dbReference>
<dbReference type="SMART" id="SM00115">
    <property type="entry name" value="CASc"/>
    <property type="match status" value="1"/>
</dbReference>
<dbReference type="SUPFAM" id="SSF52129">
    <property type="entry name" value="Caspase-like"/>
    <property type="match status" value="1"/>
</dbReference>
<dbReference type="PROSITE" id="PS01122">
    <property type="entry name" value="CASPASE_CYS"/>
    <property type="match status" value="1"/>
</dbReference>
<dbReference type="PROSITE" id="PS01121">
    <property type="entry name" value="CASPASE_HIS"/>
    <property type="match status" value="1"/>
</dbReference>
<dbReference type="PROSITE" id="PS50207">
    <property type="entry name" value="CASPASE_P10"/>
    <property type="match status" value="1"/>
</dbReference>
<dbReference type="PROSITE" id="PS50208">
    <property type="entry name" value="CASPASE_P20"/>
    <property type="match status" value="1"/>
</dbReference>
<reference key="1">
    <citation type="journal article" date="1997" name="Genomics">
        <title>Identification and mapping of Casp7, a cysteine protease resembling CPP32 beta, interleukin-1 beta converting enzyme, and CED-3.</title>
        <authorList>
            <person name="Juan T.S.-C."/>
            <person name="McNiece I.K."/>
            <person name="Argento J.M."/>
            <person name="Jenkins N.A."/>
            <person name="Gilbert D.J."/>
            <person name="Copeland N.G."/>
            <person name="Fletcher F.A."/>
        </authorList>
    </citation>
    <scope>NUCLEOTIDE SEQUENCE [MRNA]</scope>
    <scope>TISSUE SPECIFICITY</scope>
    <source>
        <tissue>Skeletal muscle</tissue>
    </source>
</reference>
<reference key="2">
    <citation type="journal article" date="1997" name="Biochem. Biophys. Res. Commun.">
        <title>Wortmannin enhances CPP32-like activity during neuronal differentiation of P19 embryonal carcinoma cells induced by retinoic acid.</title>
        <authorList>
            <person name="Mukasa T."/>
            <person name="Khoroku Y."/>
            <person name="Tsukahara T."/>
            <person name="Momoi M.Y."/>
            <person name="Kimura I."/>
            <person name="Momoi T."/>
        </authorList>
    </citation>
    <scope>NUCLEOTIDE SEQUENCE [MRNA]</scope>
</reference>
<reference key="3">
    <citation type="journal article" date="1997" name="FEBS Lett.">
        <title>Characterization of seven murine caspase family members.</title>
        <authorList>
            <person name="van de Craen M."/>
            <person name="Vandenabeele P."/>
            <person name="Declercq W."/>
            <person name="van den Brande I."/>
            <person name="van Loo G."/>
            <person name="Molemans F."/>
            <person name="Schotte P."/>
            <person name="van Criekinge W."/>
            <person name="Beyaert R."/>
            <person name="Fiers W."/>
        </authorList>
    </citation>
    <scope>NUCLEOTIDE SEQUENCE [MRNA]</scope>
    <source>
        <strain>C3H/An</strain>
    </source>
</reference>
<reference key="4">
    <citation type="journal article" date="2004" name="Genome Res.">
        <title>The status, quality, and expansion of the NIH full-length cDNA project: the Mammalian Gene Collection (MGC).</title>
        <authorList>
            <consortium name="The MGC Project Team"/>
        </authorList>
    </citation>
    <scope>NUCLEOTIDE SEQUENCE [LARGE SCALE MRNA]</scope>
</reference>
<reference key="5">
    <citation type="journal article" date="2007" name="Proc. Natl. Acad. Sci. U.S.A.">
        <title>Large-scale phosphorylation analysis of mouse liver.</title>
        <authorList>
            <person name="Villen J."/>
            <person name="Beausoleil S.A."/>
            <person name="Gerber S.A."/>
            <person name="Gygi S.P."/>
        </authorList>
    </citation>
    <scope>ACETYLATION [LARGE SCALE ANALYSIS] AT MET-1</scope>
    <scope>IDENTIFICATION BY MASS SPECTROMETRY [LARGE SCALE ANALYSIS]</scope>
    <source>
        <tissue>Liver</tissue>
    </source>
</reference>
<reference key="6">
    <citation type="journal article" date="2006" name="Science">
        <title>Caspases 3 and 7: key mediators of mitochondrial events of apoptosis.</title>
        <authorList>
            <person name="Lakhani S.A."/>
            <person name="Masud A."/>
            <person name="Kuida K."/>
            <person name="Porter G.A. Jr."/>
            <person name="Booth C.J."/>
            <person name="Mehal W.Z."/>
            <person name="Inayat I."/>
            <person name="Flavell R.A."/>
        </authorList>
    </citation>
    <scope>FUNCTION</scope>
    <scope>DISRUPTION PHENOTYPE</scope>
</reference>
<reference key="7">
    <citation type="journal article" date="2008" name="Mol. Cell. Proteomics">
        <title>Targeted peptidecentric proteomics reveals caspase-7 as a substrate of the caspase-1 inflammasomes.</title>
        <authorList>
            <person name="Lamkanfi M."/>
            <person name="Kanneganti T.D."/>
            <person name="Van Damme P."/>
            <person name="Vanden Berghe T."/>
            <person name="Vanoverberghe I."/>
            <person name="Vandekerckhove J."/>
            <person name="Vandenabeele P."/>
            <person name="Gevaert K."/>
            <person name="Nunez G."/>
        </authorList>
    </citation>
    <scope>ACTIVITY REGULATION</scope>
    <scope>PROTEOLYTIC CLEAVAGE</scope>
    <scope>MUTAGENESIS OF ASP-23 AND ASP-198</scope>
</reference>
<reference key="8">
    <citation type="journal article" date="2009" name="Blood">
        <title>Caspase-7 deficiency protects from endotoxin-induced lymphocyte apoptosis and improves survival.</title>
        <authorList>
            <person name="Lamkanfi M."/>
            <person name="Moreira L.O."/>
            <person name="Makena P."/>
            <person name="Spierings D.C."/>
            <person name="Boyd K."/>
            <person name="Murray P.J."/>
            <person name="Green D.R."/>
            <person name="Kanneganti T.D."/>
        </authorList>
    </citation>
    <scope>FUNCTION</scope>
    <scope>DISRUPTION PHENOTYPE</scope>
</reference>
<reference key="9">
    <citation type="journal article" date="2010" name="Cell">
        <title>A tissue-specific atlas of mouse protein phosphorylation and expression.</title>
        <authorList>
            <person name="Huttlin E.L."/>
            <person name="Jedrychowski M.P."/>
            <person name="Elias J.E."/>
            <person name="Goswami T."/>
            <person name="Rad R."/>
            <person name="Beausoleil S.A."/>
            <person name="Villen J."/>
            <person name="Haas W."/>
            <person name="Sowa M.E."/>
            <person name="Gygi S.P."/>
        </authorList>
    </citation>
    <scope>IDENTIFICATION BY MASS SPECTROMETRY [LARGE SCALE ANALYSIS]</scope>
    <source>
        <tissue>Heart</tissue>
        <tissue>Kidney</tissue>
        <tissue>Liver</tissue>
        <tissue>Lung</tissue>
        <tissue>Spleen</tissue>
        <tissue>Testis</tissue>
    </source>
</reference>
<reference key="10">
    <citation type="journal article" date="2012" name="Mol. Cell">
        <title>Inflammasome-activated caspase 7 cleaves PARP1 to enhance the expression of a subset of NF-kappaB target genes.</title>
        <authorList>
            <person name="Erener S."/>
            <person name="Petrilli V."/>
            <person name="Kassner I."/>
            <person name="Minotti R."/>
            <person name="Castillo R."/>
            <person name="Santoro R."/>
            <person name="Hassa P.O."/>
            <person name="Tschopp J."/>
            <person name="Hottiger M.O."/>
        </authorList>
    </citation>
    <scope>FUNCTION</scope>
</reference>
<reference key="11">
    <citation type="journal article" date="2012" name="PLoS Pathog.">
        <title>Membrane damage during Listeria monocytogenes infection triggers a caspase-7 dependent cytoprotective response.</title>
        <authorList>
            <person name="Cassidy S.K."/>
            <person name="Hagar J.A."/>
            <person name="Kanneganti T.D."/>
            <person name="Franchi L."/>
            <person name="Nunez G."/>
            <person name="O'Riordan M.X."/>
        </authorList>
    </citation>
    <scope>FUNCTION</scope>
    <scope>PROTEOLYTIC CLEAVAGE</scope>
</reference>
<reference key="12">
    <citation type="journal article" date="2014" name="J. Biol. Chem.">
        <title>Exposure of phosphatidylserine by Xk-related protein family members during apoptosis.</title>
        <authorList>
            <person name="Suzuki J."/>
            <person name="Imanishi E."/>
            <person name="Nagata S."/>
        </authorList>
    </citation>
    <scope>FUNCTION</scope>
    <scope>CATALYTIC ACTIVITY</scope>
</reference>
<reference key="13">
    <citation type="journal article" date="2019" name="Mol. Cell">
        <title>Apoptotic caspases suppress type i interferon production via the cleavage of cGAS, MAVS, and IRF3.</title>
        <authorList>
            <person name="Ning X."/>
            <person name="Wang Y."/>
            <person name="Jing M."/>
            <person name="Sha M."/>
            <person name="Lv M."/>
            <person name="Gao P."/>
            <person name="Zhang R."/>
            <person name="Huang X."/>
            <person name="Feng J.M."/>
            <person name="Jiang Z."/>
        </authorList>
    </citation>
    <scope>FUNCTION</scope>
</reference>
<reference key="14">
    <citation type="journal article" date="2019" name="PLoS Pathog.">
        <title>Gasdermin-D and Caspase-7 are the key Caspase-1/8 substrates downstream of the NAIP5/NLRC4 inflammasome required for restriction of Legionella pneumophila.</title>
        <authorList>
            <person name="Goncalves A.V."/>
            <person name="Margolis S.R."/>
            <person name="Quirino G.F.S."/>
            <person name="Mascarenhas D.P.A."/>
            <person name="Rauch I."/>
            <person name="Nichols R.D."/>
            <person name="Ansaldo E."/>
            <person name="Fontana M.F."/>
            <person name="Vance R.E."/>
            <person name="Zamboni D.S."/>
        </authorList>
    </citation>
    <scope>PROTEOLYTIC CLEAVAGE</scope>
</reference>
<reference key="15">
    <citation type="journal article" date="2022" name="Nature">
        <title>Caspase-7 activates ASM to repair gasdermin and perforin pores.</title>
        <authorList>
            <person name="Nozaki K."/>
            <person name="Maltez V.I."/>
            <person name="Rayamajhi M."/>
            <person name="Tubbs A.L."/>
            <person name="Mitchell J.E."/>
            <person name="Lacey C.A."/>
            <person name="Harvest C.K."/>
            <person name="Li L."/>
            <person name="Nash W.T."/>
            <person name="Larson H.N."/>
            <person name="McGlaughon B.D."/>
            <person name="Moorman N.J."/>
            <person name="Brown M.G."/>
            <person name="Whitmire J.K."/>
            <person name="Miao E.A."/>
        </authorList>
    </citation>
    <scope>FUNCTION</scope>
    <scope>CATALYTIC ACTIVITY</scope>
    <scope>ACTIVITY REGULATION</scope>
    <scope>SUBCELLULAR LOCATION</scope>
    <scope>PROTEOLYTIC CLEAVAGE</scope>
</reference>
<proteinExistence type="evidence at protein level"/>
<comment type="function">
    <text evidence="3 5 6 7 8 9 10 11 13">Thiol protease involved in different programmed cell death processes, such as apoptosis, pyroptosis or granzyme-mediated programmed cell death, by proteolytically cleaving target proteins (PubMed:16469926, PubMed:19168786). Has a marked preference for Asp-Glu-Val-Asp (DEVD) consensus sequences, with some plasticity for alternate non-canonical sequences (PubMed:25231987). Its involvement in the different programmed cell death processes is probably determined by upstream proteases that activate CASP7 (PubMed:18667412, PubMed:35705808). Acts as an effector caspase involved in the execution phase of apoptosis: following cleavage and activation by initiator caspases (CASP8 and/or CASP9), mediates execution of apoptosis by catalyzing cleavage of proteins, such as CLSPN, PARP1, PTGES3 and YY1 (PubMed:16469926). Compared to CASP3, acts as a minor executioner caspase and cleaves a limited set of target proteins (PubMed:16469926). Acts as a key regulator of the inflammatory response in response to bacterial infection by catalyzing cleavage and activation of the sphingomyelin phosphodiesterase SMPD1 in the extracellular milieu, thereby promoting membrane repair (PubMed:35705808). Regulates pyroptosis in intestinal epithelial cells: cleaved and activated by CASP1 in response to S.typhimurium infection, promoting its secretion to the extracellular milieu, where it catalyzes activation of SMPD1, generating ceramides that repair membranes and counteract the action of gasdermin-D (GSDMD) pores (PubMed:22807671, PubMed:35705808). Regulates granzyme-mediated programmed cell death in hepatocytes: cleaved and activated by granzyme B (GZMB) in response to bacterial infection, promoting its secretion to the extracellular milieu, where it catalyzes activation of SMPD1, generating ceramides that repair membranes and counteract the action of perforin (PRF1) pores (PubMed:35705808). Following cleavage by CASP1 in response to inflammasome activation, catalyzes processing and inactivation of PARP1, alleviating the transcription repressor activity of PARP1 (PubMed:22464733). Acts as an inhibitor of type I interferon production during virus-induced apoptosis by mediating cleavage of antiviral proteins CGAS, IRF3 and MAVS, thereby preventing cytokine overproduction (PubMed:30878284). Cleaves and activates sterol regulatory element binding proteins (SREBPs) (By similarity). Cleaves phospholipid scramblase proteins XKR4, XKR8 and XKR9 (PubMed:25231987). Cleaves BIRC6 following inhibition of BIRC6-caspase binding by DIABLO/SMAC (By similarity).</text>
</comment>
<comment type="catalytic activity">
    <reaction evidence="10 13">
        <text>Strict requirement for an Asp residue at position P1 and has a preferred cleavage sequence of Asp-Glu-Val-Asp-|-.</text>
        <dbReference type="EC" id="3.4.22.60"/>
    </reaction>
</comment>
<comment type="activity regulation">
    <text evidence="2 3 6 13">During activation, the N-terminal disordered prodomain is removed by cleavage (PubMed:18667412). Concomitantly, double cleavage gives rise to a large Caspase-7 subunit p20 and a small Caspase-7 subunit p11 (PubMed:18667412). The two large and two small subunits then assemble to form the active CASP7 complex (PubMed:18667412). Can be cleaved and activated by different caspases, depending on the context (PubMed:18667412, PubMed:35705808). Cleaved and activated by initiator caspases (CASP8 and/or CASP9), leading to execution phase of apoptosis (By similarity). Cleavage and maturation by GZMB regulates granzyme-mediated programmed cell death (PubMed:35705808). Cleavage and maturation by CASP1 regulates pyroptosis (PubMed:18667412, PubMed:35705808). Inhibited by XIAP, which directly binds to the active site pocket and obstructs substrate entry (By similarity). Phosphorylation at Ser-30 and Ser-239 by PAK2 inhibits its activity (By similarity). Inhibited by BIRC6; following inhibition of BIRC6-caspase binding by DIABLO/SMAC, BIRC6 is subjected to caspase cleavage, leading to an increase in active caspases (By similarity).</text>
</comment>
<comment type="subunit">
    <text evidence="3">Heterotetramer that consists of two anti-parallel arranged heterodimers, each one formed by a 20 kDa (p20) and a 11 kDa (p11) subunit (By similarity). Interacts with XIAP (via its second BIR domain); inhibiting CASP7 activity (By similarity). Interacts with BIRC6/bruce. Interacts with ATXN3 (short isoform 1) (By similarity). Interacts with HSPA5 (By similarity).</text>
</comment>
<comment type="interaction">
    <interactant intactId="EBI-5307197">
        <id>P97864</id>
    </interactant>
    <interactant intactId="EBI-642213">
        <id>P11103</id>
        <label>Parp1</label>
    </interactant>
    <organismsDiffer>false</organismsDiffer>
    <experiments>3</experiments>
</comment>
<comment type="interaction">
    <interactant intactId="EBI-5307197">
        <id>P97864</id>
    </interactant>
    <interactant intactId="EBI-352460">
        <id>P62270</id>
        <label>Rps18</label>
    </interactant>
    <organismsDiffer>false</organismsDiffer>
    <experiments>4</experiments>
</comment>
<comment type="subcellular location">
    <subcellularLocation>
        <location evidence="3">Cytoplasm</location>
        <location evidence="3">Cytosol</location>
    </subcellularLocation>
    <subcellularLocation>
        <location evidence="3">Nucleus</location>
    </subcellularLocation>
    <subcellularLocation>
        <location evidence="13">Secreted</location>
        <location evidence="13">Extracellular space</location>
    </subcellularLocation>
    <text evidence="13">Following cleavage and activation by CASP1 or granzyme B (GZMB), secreted into the extracellular milieu by passing through the gasdermin-D (GSDMD) pores or perforin (PRF1) pore, respectively.</text>
</comment>
<comment type="tissue specificity">
    <text evidence="14">Highly expressed in heart, lung, liver and kidney. Low levels in spleen, skeletal muscle and testis. No expression in the brain.</text>
</comment>
<comment type="domain">
    <text evidence="3">The exosite polybasic region mediates non-specific RNA-binding, acting as a bridge for RNA-binding target proteins, such as PARP1. The exosite is also required for interaction with non-RNA-binding proteins, such as Hsp90 co-chaperone PTGES3.</text>
</comment>
<comment type="PTM">
    <text evidence="3 6 9 12 13">Cleavage by different proteases, such as granzyme B (GZMB), caspase-1 (CASP1), caspase-8 (CASP8) or caspase-9 (CASP9) generate the two active subunits (PubMed:18667412, PubMed:22807671, PubMed:31251782, PubMed:35705808). Its involvement in different programmed cell death processes is probably specified by the protease that activates CASP7 (PubMed:35705808). Cleaved and activated by initiator caspases (CASP8 and/or CASP9), leading to execution phase of apoptosis (By similarity). Cleavage and maturation by GZMB regulates granzyme-mediated programmed cell death (PubMed:35705808). Cleaved and activated by CASP1 in response to bacterial infection (PubMed:18667412, PubMed:31251782, PubMed:35705808). Propeptide domains can also be cleaved efficiently by CASP3 (By similarity). Active heterodimers between the small subunit of caspase-7 and the large subunit of CASP3, and vice versa, also occur (By similarity). Also cleaved at the N-terminus at alternative sites by CAPN1, leading to its activation (By similarity).</text>
</comment>
<comment type="PTM">
    <text evidence="3">Phosphorylation at Ser-30 and Ser-239 by PAK2 inhibits its activity (By similarity). Phosphorylation at Ser-30 prevents cleavage and activation by initiator caspase CASP9, while phosphorylation at Ser-239 prevents thiol protease activity by preventing substrate-binding (By similarity).</text>
</comment>
<comment type="PTM">
    <text evidence="2">Ubiquitinated by BIRC6; this activity is inhibited by DIABLO/SMAC.</text>
</comment>
<comment type="disruption phenotype">
    <text evidence="5 7">No visible phenotype; on the 129/Svj background, mice are healthy (PubMed:16469926). Mice display impaired lipopolysaccharide (LPS)-induced lymphocyte apoptosis and are markedly protected from LPS-induced lethality (PubMed:19168786). Mice lacking Casp3 and Casp7 on the C57BL/6J background die immediately after birth because of defective heart development (PubMed:16469926).</text>
</comment>
<comment type="similarity">
    <text evidence="16">Belongs to the peptidase C14A family.</text>
</comment>
<comment type="sequence caution" evidence="16">
    <conflict type="erroneous initiation">
        <sequence resource="EMBL-CDS" id="AAC53068"/>
    </conflict>
</comment>
<comment type="online information" name="Protein Spotlight">
    <link uri="https://www.proteinspotlight.org/back_issues/252/"/>
    <text>Delayed - Issue 252 of November 2022</text>
</comment>
<organism>
    <name type="scientific">Mus musculus</name>
    <name type="common">Mouse</name>
    <dbReference type="NCBI Taxonomy" id="10090"/>
    <lineage>
        <taxon>Eukaryota</taxon>
        <taxon>Metazoa</taxon>
        <taxon>Chordata</taxon>
        <taxon>Craniata</taxon>
        <taxon>Vertebrata</taxon>
        <taxon>Euteleostomi</taxon>
        <taxon>Mammalia</taxon>
        <taxon>Eutheria</taxon>
        <taxon>Euarchontoglires</taxon>
        <taxon>Glires</taxon>
        <taxon>Rodentia</taxon>
        <taxon>Myomorpha</taxon>
        <taxon>Muroidea</taxon>
        <taxon>Muridae</taxon>
        <taxon>Murinae</taxon>
        <taxon>Mus</taxon>
        <taxon>Mus</taxon>
    </lineage>
</organism>
<name>CASP7_MOUSE</name>